<name>TIGD6_HUMAN</name>
<reference key="1">
    <citation type="journal article" date="2001" name="Genome Res.">
        <title>Towards a catalog of human genes and proteins: sequencing and analysis of 500 novel complete protein coding human cDNAs.</title>
        <authorList>
            <person name="Wiemann S."/>
            <person name="Weil B."/>
            <person name="Wellenreuther R."/>
            <person name="Gassenhuber J."/>
            <person name="Glassl S."/>
            <person name="Ansorge W."/>
            <person name="Boecher M."/>
            <person name="Bloecker H."/>
            <person name="Bauersachs S."/>
            <person name="Blum H."/>
            <person name="Lauber J."/>
            <person name="Duesterhoeft A."/>
            <person name="Beyer A."/>
            <person name="Koehrer K."/>
            <person name="Strack N."/>
            <person name="Mewes H.-W."/>
            <person name="Ottenwaelder B."/>
            <person name="Obermaier B."/>
            <person name="Tampe J."/>
            <person name="Heubner D."/>
            <person name="Wambutt R."/>
            <person name="Korn B."/>
            <person name="Klein M."/>
            <person name="Poustka A."/>
        </authorList>
    </citation>
    <scope>NUCLEOTIDE SEQUENCE [LARGE SCALE MRNA]</scope>
    <source>
        <tissue>Amygdala</tissue>
    </source>
</reference>
<reference key="2">
    <citation type="journal article" date="2004" name="Nat. Genet.">
        <title>Complete sequencing and characterization of 21,243 full-length human cDNAs.</title>
        <authorList>
            <person name="Ota T."/>
            <person name="Suzuki Y."/>
            <person name="Nishikawa T."/>
            <person name="Otsuki T."/>
            <person name="Sugiyama T."/>
            <person name="Irie R."/>
            <person name="Wakamatsu A."/>
            <person name="Hayashi K."/>
            <person name="Sato H."/>
            <person name="Nagai K."/>
            <person name="Kimura K."/>
            <person name="Makita H."/>
            <person name="Sekine M."/>
            <person name="Obayashi M."/>
            <person name="Nishi T."/>
            <person name="Shibahara T."/>
            <person name="Tanaka T."/>
            <person name="Ishii S."/>
            <person name="Yamamoto J."/>
            <person name="Saito K."/>
            <person name="Kawai Y."/>
            <person name="Isono Y."/>
            <person name="Nakamura Y."/>
            <person name="Nagahari K."/>
            <person name="Murakami K."/>
            <person name="Yasuda T."/>
            <person name="Iwayanagi T."/>
            <person name="Wagatsuma M."/>
            <person name="Shiratori A."/>
            <person name="Sudo H."/>
            <person name="Hosoiri T."/>
            <person name="Kaku Y."/>
            <person name="Kodaira H."/>
            <person name="Kondo H."/>
            <person name="Sugawara M."/>
            <person name="Takahashi M."/>
            <person name="Kanda K."/>
            <person name="Yokoi T."/>
            <person name="Furuya T."/>
            <person name="Kikkawa E."/>
            <person name="Omura Y."/>
            <person name="Abe K."/>
            <person name="Kamihara K."/>
            <person name="Katsuta N."/>
            <person name="Sato K."/>
            <person name="Tanikawa M."/>
            <person name="Yamazaki M."/>
            <person name="Ninomiya K."/>
            <person name="Ishibashi T."/>
            <person name="Yamashita H."/>
            <person name="Murakawa K."/>
            <person name="Fujimori K."/>
            <person name="Tanai H."/>
            <person name="Kimata M."/>
            <person name="Watanabe M."/>
            <person name="Hiraoka S."/>
            <person name="Chiba Y."/>
            <person name="Ishida S."/>
            <person name="Ono Y."/>
            <person name="Takiguchi S."/>
            <person name="Watanabe S."/>
            <person name="Yosida M."/>
            <person name="Hotuta T."/>
            <person name="Kusano J."/>
            <person name="Kanehori K."/>
            <person name="Takahashi-Fujii A."/>
            <person name="Hara H."/>
            <person name="Tanase T.-O."/>
            <person name="Nomura Y."/>
            <person name="Togiya S."/>
            <person name="Komai F."/>
            <person name="Hara R."/>
            <person name="Takeuchi K."/>
            <person name="Arita M."/>
            <person name="Imose N."/>
            <person name="Musashino K."/>
            <person name="Yuuki H."/>
            <person name="Oshima A."/>
            <person name="Sasaki N."/>
            <person name="Aotsuka S."/>
            <person name="Yoshikawa Y."/>
            <person name="Matsunawa H."/>
            <person name="Ichihara T."/>
            <person name="Shiohata N."/>
            <person name="Sano S."/>
            <person name="Moriya S."/>
            <person name="Momiyama H."/>
            <person name="Satoh N."/>
            <person name="Takami S."/>
            <person name="Terashima Y."/>
            <person name="Suzuki O."/>
            <person name="Nakagawa S."/>
            <person name="Senoh A."/>
            <person name="Mizoguchi H."/>
            <person name="Goto Y."/>
            <person name="Shimizu F."/>
            <person name="Wakebe H."/>
            <person name="Hishigaki H."/>
            <person name="Watanabe T."/>
            <person name="Sugiyama A."/>
            <person name="Takemoto M."/>
            <person name="Kawakami B."/>
            <person name="Yamazaki M."/>
            <person name="Watanabe K."/>
            <person name="Kumagai A."/>
            <person name="Itakura S."/>
            <person name="Fukuzumi Y."/>
            <person name="Fujimori Y."/>
            <person name="Komiyama M."/>
            <person name="Tashiro H."/>
            <person name="Tanigami A."/>
            <person name="Fujiwara T."/>
            <person name="Ono T."/>
            <person name="Yamada K."/>
            <person name="Fujii Y."/>
            <person name="Ozaki K."/>
            <person name="Hirao M."/>
            <person name="Ohmori Y."/>
            <person name="Kawabata A."/>
            <person name="Hikiji T."/>
            <person name="Kobatake N."/>
            <person name="Inagaki H."/>
            <person name="Ikema Y."/>
            <person name="Okamoto S."/>
            <person name="Okitani R."/>
            <person name="Kawakami T."/>
            <person name="Noguchi S."/>
            <person name="Itoh T."/>
            <person name="Shigeta K."/>
            <person name="Senba T."/>
            <person name="Matsumura K."/>
            <person name="Nakajima Y."/>
            <person name="Mizuno T."/>
            <person name="Morinaga M."/>
            <person name="Sasaki M."/>
            <person name="Togashi T."/>
            <person name="Oyama M."/>
            <person name="Hata H."/>
            <person name="Watanabe M."/>
            <person name="Komatsu T."/>
            <person name="Mizushima-Sugano J."/>
            <person name="Satoh T."/>
            <person name="Shirai Y."/>
            <person name="Takahashi Y."/>
            <person name="Nakagawa K."/>
            <person name="Okumura K."/>
            <person name="Nagase T."/>
            <person name="Nomura N."/>
            <person name="Kikuchi H."/>
            <person name="Masuho Y."/>
            <person name="Yamashita R."/>
            <person name="Nakai K."/>
            <person name="Yada T."/>
            <person name="Nakamura Y."/>
            <person name="Ohara O."/>
            <person name="Isogai T."/>
            <person name="Sugano S."/>
        </authorList>
    </citation>
    <scope>NUCLEOTIDE SEQUENCE [LARGE SCALE MRNA]</scope>
    <source>
        <tissue>Tongue</tissue>
    </source>
</reference>
<reference key="3">
    <citation type="submission" date="2004-06" db="EMBL/GenBank/DDBJ databases">
        <title>Cloning of human full open reading frames in Gateway(TM) system entry vector (pDONR201).</title>
        <authorList>
            <person name="Ebert L."/>
            <person name="Schick M."/>
            <person name="Neubert P."/>
            <person name="Schatten R."/>
            <person name="Henze S."/>
            <person name="Korn B."/>
        </authorList>
    </citation>
    <scope>NUCLEOTIDE SEQUENCE [LARGE SCALE MRNA]</scope>
</reference>
<reference key="4">
    <citation type="journal article" date="2004" name="Genome Res.">
        <title>The status, quality, and expansion of the NIH full-length cDNA project: the Mammalian Gene Collection (MGC).</title>
        <authorList>
            <consortium name="The MGC Project Team"/>
        </authorList>
    </citation>
    <scope>NUCLEOTIDE SEQUENCE [LARGE SCALE MRNA]</scope>
    <scope>VARIANT ARG-327</scope>
    <source>
        <tissue>Colon</tissue>
    </source>
</reference>
<dbReference type="EMBL" id="AL136539">
    <property type="protein sequence ID" value="CAB66474.1"/>
    <property type="molecule type" value="mRNA"/>
</dbReference>
<dbReference type="EMBL" id="AK056604">
    <property type="protein sequence ID" value="BAB71230.1"/>
    <property type="molecule type" value="mRNA"/>
</dbReference>
<dbReference type="EMBL" id="AK096325">
    <property type="protein sequence ID" value="BAG53260.1"/>
    <property type="molecule type" value="mRNA"/>
</dbReference>
<dbReference type="EMBL" id="CR533559">
    <property type="protein sequence ID" value="CAG38590.1"/>
    <property type="molecule type" value="mRNA"/>
</dbReference>
<dbReference type="EMBL" id="BC117249">
    <property type="protein sequence ID" value="AAI17250.1"/>
    <property type="molecule type" value="mRNA"/>
</dbReference>
<dbReference type="CCDS" id="CCDS4301.1"/>
<dbReference type="RefSeq" id="NP_001230182.1">
    <property type="nucleotide sequence ID" value="NM_001243253.2"/>
</dbReference>
<dbReference type="RefSeq" id="NP_001399101.1">
    <property type="nucleotide sequence ID" value="NM_001412172.1"/>
</dbReference>
<dbReference type="RefSeq" id="NP_112215.1">
    <property type="nucleotide sequence ID" value="NM_030953.4"/>
</dbReference>
<dbReference type="SMR" id="Q17RP2"/>
<dbReference type="BioGRID" id="123582">
    <property type="interactions" value="26"/>
</dbReference>
<dbReference type="FunCoup" id="Q17RP2">
    <property type="interactions" value="295"/>
</dbReference>
<dbReference type="IntAct" id="Q17RP2">
    <property type="interactions" value="20"/>
</dbReference>
<dbReference type="STRING" id="9606.ENSP00000296736"/>
<dbReference type="GlyConnect" id="2085">
    <property type="glycosylation" value="3 N-Linked glycans (1 site)"/>
</dbReference>
<dbReference type="GlyCosmos" id="Q17RP2">
    <property type="glycosylation" value="1 site, 6 glycans"/>
</dbReference>
<dbReference type="GlyGen" id="Q17RP2">
    <property type="glycosylation" value="2 sites, 6 N-linked glycans (1 site), 1 O-linked glycan (1 site)"/>
</dbReference>
<dbReference type="iPTMnet" id="Q17RP2"/>
<dbReference type="PhosphoSitePlus" id="Q17RP2"/>
<dbReference type="BioMuta" id="TIGD6"/>
<dbReference type="DMDM" id="124053415"/>
<dbReference type="jPOST" id="Q17RP2"/>
<dbReference type="MassIVE" id="Q17RP2"/>
<dbReference type="PaxDb" id="9606-ENSP00000296736"/>
<dbReference type="PeptideAtlas" id="Q17RP2"/>
<dbReference type="ProteomicsDB" id="61161"/>
<dbReference type="Antibodypedia" id="49916">
    <property type="antibodies" value="11 antibodies from 7 providers"/>
</dbReference>
<dbReference type="DNASU" id="81789"/>
<dbReference type="Ensembl" id="ENST00000296736.4">
    <property type="protein sequence ID" value="ENSP00000296736.3"/>
    <property type="gene ID" value="ENSG00000164296.7"/>
</dbReference>
<dbReference type="Ensembl" id="ENST00000515406.2">
    <property type="protein sequence ID" value="ENSP00000425318.2"/>
    <property type="gene ID" value="ENSG00000164296.7"/>
</dbReference>
<dbReference type="GeneID" id="81789"/>
<dbReference type="KEGG" id="hsa:81789"/>
<dbReference type="MANE-Select" id="ENST00000296736.4">
    <property type="protein sequence ID" value="ENSP00000296736.3"/>
    <property type="RefSeq nucleotide sequence ID" value="NM_030953.4"/>
    <property type="RefSeq protein sequence ID" value="NP_112215.1"/>
</dbReference>
<dbReference type="UCSC" id="uc003lri.4">
    <property type="organism name" value="human"/>
</dbReference>
<dbReference type="AGR" id="HGNC:18332"/>
<dbReference type="CTD" id="81789"/>
<dbReference type="GeneCards" id="TIGD6"/>
<dbReference type="HGNC" id="HGNC:18332">
    <property type="gene designation" value="TIGD6"/>
</dbReference>
<dbReference type="HPA" id="ENSG00000164296">
    <property type="expression patterns" value="Low tissue specificity"/>
</dbReference>
<dbReference type="neXtProt" id="NX_Q17RP2"/>
<dbReference type="OpenTargets" id="ENSG00000164296"/>
<dbReference type="PharmGKB" id="PA38525"/>
<dbReference type="VEuPathDB" id="HostDB:ENSG00000164296"/>
<dbReference type="eggNOG" id="KOG3105">
    <property type="taxonomic scope" value="Eukaryota"/>
</dbReference>
<dbReference type="GeneTree" id="ENSGT00940000163700"/>
<dbReference type="HOGENOM" id="CLU_018294_0_4_1"/>
<dbReference type="InParanoid" id="Q17RP2"/>
<dbReference type="OMA" id="RCWQKAG"/>
<dbReference type="OrthoDB" id="9909311at2759"/>
<dbReference type="PAN-GO" id="Q17RP2">
    <property type="GO annotations" value="2 GO annotations based on evolutionary models"/>
</dbReference>
<dbReference type="PhylomeDB" id="Q17RP2"/>
<dbReference type="TreeFam" id="TF101131"/>
<dbReference type="PathwayCommons" id="Q17RP2"/>
<dbReference type="SignaLink" id="Q17RP2"/>
<dbReference type="BioGRID-ORCS" id="81789">
    <property type="hits" value="11 hits in 1155 CRISPR screens"/>
</dbReference>
<dbReference type="GenomeRNAi" id="81789"/>
<dbReference type="Pharos" id="Q17RP2">
    <property type="development level" value="Tdark"/>
</dbReference>
<dbReference type="PRO" id="PR:Q17RP2"/>
<dbReference type="Proteomes" id="UP000005640">
    <property type="component" value="Chromosome 5"/>
</dbReference>
<dbReference type="RNAct" id="Q17RP2">
    <property type="molecule type" value="protein"/>
</dbReference>
<dbReference type="Bgee" id="ENSG00000164296">
    <property type="expression patterns" value="Expressed in primordial germ cell in gonad and 108 other cell types or tissues"/>
</dbReference>
<dbReference type="GO" id="GO:0005634">
    <property type="term" value="C:nucleus"/>
    <property type="evidence" value="ECO:0000314"/>
    <property type="project" value="LIFEdb"/>
</dbReference>
<dbReference type="GO" id="GO:0003677">
    <property type="term" value="F:DNA binding"/>
    <property type="evidence" value="ECO:0000318"/>
    <property type="project" value="GO_Central"/>
</dbReference>
<dbReference type="FunFam" id="1.10.10.60:FF:000350">
    <property type="entry name" value="Tigger transposable element derived 6"/>
    <property type="match status" value="1"/>
</dbReference>
<dbReference type="Gene3D" id="1.10.10.60">
    <property type="entry name" value="Homeodomain-like"/>
    <property type="match status" value="2"/>
</dbReference>
<dbReference type="InterPro" id="IPR050863">
    <property type="entry name" value="CenT-Element_Derived"/>
</dbReference>
<dbReference type="InterPro" id="IPR004875">
    <property type="entry name" value="DDE_SF_endonuclease_dom"/>
</dbReference>
<dbReference type="InterPro" id="IPR009057">
    <property type="entry name" value="Homeodomain-like_sf"/>
</dbReference>
<dbReference type="InterPro" id="IPR006600">
    <property type="entry name" value="HTH_CenpB_DNA-bd_dom"/>
</dbReference>
<dbReference type="InterPro" id="IPR007889">
    <property type="entry name" value="HTH_Psq"/>
</dbReference>
<dbReference type="PANTHER" id="PTHR19303:SF52">
    <property type="entry name" value="TIGGER TRANSPOSABLE ELEMENT-DERIVED PROTEIN 6"/>
    <property type="match status" value="1"/>
</dbReference>
<dbReference type="PANTHER" id="PTHR19303">
    <property type="entry name" value="TRANSPOSON"/>
    <property type="match status" value="1"/>
</dbReference>
<dbReference type="Pfam" id="PF04218">
    <property type="entry name" value="CENP-B_N"/>
    <property type="match status" value="1"/>
</dbReference>
<dbReference type="Pfam" id="PF03184">
    <property type="entry name" value="DDE_1"/>
    <property type="match status" value="1"/>
</dbReference>
<dbReference type="Pfam" id="PF03221">
    <property type="entry name" value="HTH_Tnp_Tc5"/>
    <property type="match status" value="1"/>
</dbReference>
<dbReference type="SMART" id="SM00674">
    <property type="entry name" value="CENPB"/>
    <property type="match status" value="1"/>
</dbReference>
<dbReference type="SUPFAM" id="SSF46689">
    <property type="entry name" value="Homeodomain-like"/>
    <property type="match status" value="2"/>
</dbReference>
<dbReference type="PROSITE" id="PS51253">
    <property type="entry name" value="HTH_CENPB"/>
    <property type="match status" value="1"/>
</dbReference>
<dbReference type="PROSITE" id="PS50960">
    <property type="entry name" value="HTH_PSQ"/>
    <property type="match status" value="1"/>
</dbReference>
<protein>
    <recommendedName>
        <fullName>Tigger transposable element-derived protein 6</fullName>
    </recommendedName>
</protein>
<evidence type="ECO:0000250" key="1"/>
<evidence type="ECO:0000255" key="2"/>
<evidence type="ECO:0000255" key="3">
    <source>
        <dbReference type="PROSITE-ProRule" id="PRU00320"/>
    </source>
</evidence>
<evidence type="ECO:0000255" key="4">
    <source>
        <dbReference type="PROSITE-ProRule" id="PRU00583"/>
    </source>
</evidence>
<evidence type="ECO:0000269" key="5">
    <source>
    </source>
</evidence>
<evidence type="ECO:0000305" key="6"/>
<accession>Q17RP2</accession>
<accession>B3KTZ8</accession>
<accession>Q96MQ4</accession>
<accession>Q9H0X7</accession>
<sequence length="521" mass="58656">MANKGNKKRRQFSLEEKMKVVGAVDSGKRKGDVAKEFGITPSTLSTFLKDRTKFEEKVREASVGPQRKRMRSALYDDIDKAVFAWFQEIHAKNILVTGSVIRKKALNLANMLGYDNFQASVGWLNRFRDRHGIALKAVCREDSDRLMNGLGIDKINEWHAGEIIKLIADYSPDDIFNADETGVFFQLLPQHTLAAKGDHCRGGKKAKQRLTALFCCNASGTEKMRPLIVGRSASPHCLKNIHSLPCDYRANQWAWMTRDLFNEWLMQVDARMKRAERRILLLIDNCSAHNMLPHLERIQVGYLPSNCTAVLQPLNLGIIHTMKVLYQSHLLKQILLKLNSSEDQEEVDIKQAIDMIAAAWWSVKPSTVVKCWQKAGIVPMEFAECDTESAASEPDIAIEKLWHTVAIATCVPNEVNFQDFVTADDDLIISQDTDIIQDMVAGENTSEAGSEDEGEVSLPEQPKVTITEAISSVQKLRQFLSTCVDIPDAIFGQLNGIDEYLMKRVTQTLIDSKITDFLQTK</sequence>
<feature type="chain" id="PRO_0000272619" description="Tigger transposable element-derived protein 6">
    <location>
        <begin position="1"/>
        <end position="521"/>
    </location>
</feature>
<feature type="domain" description="HTH psq-type" evidence="3">
    <location>
        <begin position="3"/>
        <end position="54"/>
    </location>
</feature>
<feature type="domain" description="HTH CENPB-type" evidence="4">
    <location>
        <begin position="66"/>
        <end position="137"/>
    </location>
</feature>
<feature type="domain" description="DDE-1" evidence="2">
    <location>
        <begin position="170"/>
        <end position="372"/>
    </location>
</feature>
<feature type="DNA-binding region" description="H-T-H motif" evidence="1">
    <location>
        <begin position="30"/>
        <end position="50"/>
    </location>
</feature>
<feature type="DNA-binding region" description="H-T-H motif" evidence="1">
    <location>
        <begin position="99"/>
        <end position="130"/>
    </location>
</feature>
<feature type="sequence variant" id="VAR_030044" description="In dbSNP:rs9324636.">
    <original>R</original>
    <variation>W</variation>
    <location>
        <position position="59"/>
    </location>
</feature>
<feature type="sequence variant" id="VAR_030045" description="In dbSNP:rs10875553." evidence="5">
    <original>Q</original>
    <variation>R</variation>
    <location>
        <position position="327"/>
    </location>
</feature>
<feature type="sequence conflict" description="In Ref. 2; BAB71230." evidence="6" ref="2">
    <original>N</original>
    <variation>K</variation>
    <location>
        <position position="6"/>
    </location>
</feature>
<gene>
    <name type="primary">TIGD6</name>
</gene>
<organism>
    <name type="scientific">Homo sapiens</name>
    <name type="common">Human</name>
    <dbReference type="NCBI Taxonomy" id="9606"/>
    <lineage>
        <taxon>Eukaryota</taxon>
        <taxon>Metazoa</taxon>
        <taxon>Chordata</taxon>
        <taxon>Craniata</taxon>
        <taxon>Vertebrata</taxon>
        <taxon>Euteleostomi</taxon>
        <taxon>Mammalia</taxon>
        <taxon>Eutheria</taxon>
        <taxon>Euarchontoglires</taxon>
        <taxon>Primates</taxon>
        <taxon>Haplorrhini</taxon>
        <taxon>Catarrhini</taxon>
        <taxon>Hominidae</taxon>
        <taxon>Homo</taxon>
    </lineage>
</organism>
<proteinExistence type="evidence at protein level"/>
<keyword id="KW-0238">DNA-binding</keyword>
<keyword id="KW-0539">Nucleus</keyword>
<keyword id="KW-1267">Proteomics identification</keyword>
<keyword id="KW-1185">Reference proteome</keyword>
<comment type="subcellular location">
    <subcellularLocation>
        <location evidence="6">Nucleus</location>
    </subcellularLocation>
</comment>
<comment type="similarity">
    <text evidence="6">Belongs to the tigger transposable element derived protein family.</text>
</comment>